<proteinExistence type="evidence at protein level"/>
<evidence type="ECO:0000255" key="1"/>
<evidence type="ECO:0000256" key="2">
    <source>
        <dbReference type="SAM" id="MobiDB-lite"/>
    </source>
</evidence>
<evidence type="ECO:0000269" key="3">
    <source>
    </source>
</evidence>
<evidence type="ECO:0000269" key="4">
    <source>
    </source>
</evidence>
<evidence type="ECO:0000305" key="5"/>
<protein>
    <recommendedName>
        <fullName>Amino acid permease 8</fullName>
    </recommendedName>
    <alternativeName>
        <fullName>Amino acid transporter AAP8</fullName>
    </alternativeName>
</protein>
<accession>O80592</accession>
<sequence length="475" mass="51815">MDAYNNPSAVESGDAAVKSVDDDGREKRTGTFWTASAHIITAVIGSGVLSLAWAIAQLGWVAGTTVLVAFAIITYYTSTLLADCYRSPDSITGTRNYNYMGVVRSYLGGKKVQLCGVAQYVNLVGVTIGYTITASISLVAIGKSNCYHDKGHKAKCSVSNYPYMAAFGIVQIILSQLPNFHKLSFLSIIAAVMSFSYASIGIGLAIATVASGKIGKTELTGTVIGVDVTASEKVWKLFQAIGDIAFSYAFTTILIEIQDTLRSSPPENKVMKRASLVGVSTTTVFYILCGCIGYAAFGNQAPGDFLTDFGFYEPYWLIDFANACIALHLIGAYQVYAQPFFQFVEENCNKKWPQSNFINKEYSSKVPLLGKCRVNLFRLVWRTCYVVLTTFVAMIFPFFNAILGLLGAFAFWPLTVYFPVAMHIAQAKVKKYSRRWLALNLLVLVCLIVSALAAVGSIIGLINSVKSYKPFKNLD</sequence>
<keyword id="KW-0029">Amino-acid transport</keyword>
<keyword id="KW-1003">Cell membrane</keyword>
<keyword id="KW-0472">Membrane</keyword>
<keyword id="KW-1185">Reference proteome</keyword>
<keyword id="KW-0769">Symport</keyword>
<keyword id="KW-0812">Transmembrane</keyword>
<keyword id="KW-1133">Transmembrane helix</keyword>
<keyword id="KW-0813">Transport</keyword>
<gene>
    <name type="primary">AAP8</name>
    <name type="ordered locus">At1g10010</name>
    <name type="ORF">T27I1.3</name>
</gene>
<organism>
    <name type="scientific">Arabidopsis thaliana</name>
    <name type="common">Mouse-ear cress</name>
    <dbReference type="NCBI Taxonomy" id="3702"/>
    <lineage>
        <taxon>Eukaryota</taxon>
        <taxon>Viridiplantae</taxon>
        <taxon>Streptophyta</taxon>
        <taxon>Embryophyta</taxon>
        <taxon>Tracheophyta</taxon>
        <taxon>Spermatophyta</taxon>
        <taxon>Magnoliopsida</taxon>
        <taxon>eudicotyledons</taxon>
        <taxon>Gunneridae</taxon>
        <taxon>Pentapetalae</taxon>
        <taxon>rosids</taxon>
        <taxon>malvids</taxon>
        <taxon>Brassicales</taxon>
        <taxon>Brassicaceae</taxon>
        <taxon>Camelineae</taxon>
        <taxon>Arabidopsis</taxon>
    </lineage>
</organism>
<reference key="1">
    <citation type="journal article" date="2002" name="J. Biol. Chem.">
        <title>High affinity amino acid transporters specifically expressed in xylem parenchyma and developing seeds of Arabidopsis.</title>
        <authorList>
            <person name="Okumoto S."/>
            <person name="Schmidt R."/>
            <person name="Tegeder M."/>
            <person name="Fischer W.-N."/>
            <person name="Rentsch D."/>
            <person name="Frommer W.B."/>
            <person name="Koch W."/>
        </authorList>
    </citation>
    <scope>NUCLEOTIDE SEQUENCE [MRNA]</scope>
    <scope>TISSUE SPECIFICITY</scope>
    <scope>DEVELOPMENTAL STAGE</scope>
    <scope>BIOPHYSICOCHEMICAL PROPERTIES</scope>
</reference>
<reference key="2">
    <citation type="journal article" date="2000" name="Nature">
        <title>Sequence and analysis of chromosome 1 of the plant Arabidopsis thaliana.</title>
        <authorList>
            <person name="Theologis A."/>
            <person name="Ecker J.R."/>
            <person name="Palm C.J."/>
            <person name="Federspiel N.A."/>
            <person name="Kaul S."/>
            <person name="White O."/>
            <person name="Alonso J."/>
            <person name="Altafi H."/>
            <person name="Araujo R."/>
            <person name="Bowman C.L."/>
            <person name="Brooks S.Y."/>
            <person name="Buehler E."/>
            <person name="Chan A."/>
            <person name="Chao Q."/>
            <person name="Chen H."/>
            <person name="Cheuk R.F."/>
            <person name="Chin C.W."/>
            <person name="Chung M.K."/>
            <person name="Conn L."/>
            <person name="Conway A.B."/>
            <person name="Conway A.R."/>
            <person name="Creasy T.H."/>
            <person name="Dewar K."/>
            <person name="Dunn P."/>
            <person name="Etgu P."/>
            <person name="Feldblyum T.V."/>
            <person name="Feng J.-D."/>
            <person name="Fong B."/>
            <person name="Fujii C.Y."/>
            <person name="Gill J.E."/>
            <person name="Goldsmith A.D."/>
            <person name="Haas B."/>
            <person name="Hansen N.F."/>
            <person name="Hughes B."/>
            <person name="Huizar L."/>
            <person name="Hunter J.L."/>
            <person name="Jenkins J."/>
            <person name="Johnson-Hopson C."/>
            <person name="Khan S."/>
            <person name="Khaykin E."/>
            <person name="Kim C.J."/>
            <person name="Koo H.L."/>
            <person name="Kremenetskaia I."/>
            <person name="Kurtz D.B."/>
            <person name="Kwan A."/>
            <person name="Lam B."/>
            <person name="Langin-Hooper S."/>
            <person name="Lee A."/>
            <person name="Lee J.M."/>
            <person name="Lenz C.A."/>
            <person name="Li J.H."/>
            <person name="Li Y.-P."/>
            <person name="Lin X."/>
            <person name="Liu S.X."/>
            <person name="Liu Z.A."/>
            <person name="Luros J.S."/>
            <person name="Maiti R."/>
            <person name="Marziali A."/>
            <person name="Militscher J."/>
            <person name="Miranda M."/>
            <person name="Nguyen M."/>
            <person name="Nierman W.C."/>
            <person name="Osborne B.I."/>
            <person name="Pai G."/>
            <person name="Peterson J."/>
            <person name="Pham P.K."/>
            <person name="Rizzo M."/>
            <person name="Rooney T."/>
            <person name="Rowley D."/>
            <person name="Sakano H."/>
            <person name="Salzberg S.L."/>
            <person name="Schwartz J.R."/>
            <person name="Shinn P."/>
            <person name="Southwick A.M."/>
            <person name="Sun H."/>
            <person name="Tallon L.J."/>
            <person name="Tambunga G."/>
            <person name="Toriumi M.J."/>
            <person name="Town C.D."/>
            <person name="Utterback T."/>
            <person name="Van Aken S."/>
            <person name="Vaysberg M."/>
            <person name="Vysotskaia V.S."/>
            <person name="Walker M."/>
            <person name="Wu D."/>
            <person name="Yu G."/>
            <person name="Fraser C.M."/>
            <person name="Venter J.C."/>
            <person name="Davis R.W."/>
        </authorList>
    </citation>
    <scope>NUCLEOTIDE SEQUENCE [LARGE SCALE GENOMIC DNA]</scope>
    <source>
        <strain>cv. Columbia</strain>
    </source>
</reference>
<reference key="3">
    <citation type="journal article" date="2017" name="Plant J.">
        <title>Araport11: a complete reannotation of the Arabidopsis thaliana reference genome.</title>
        <authorList>
            <person name="Cheng C.Y."/>
            <person name="Krishnakumar V."/>
            <person name="Chan A.P."/>
            <person name="Thibaud-Nissen F."/>
            <person name="Schobel S."/>
            <person name="Town C.D."/>
        </authorList>
    </citation>
    <scope>GENOME REANNOTATION</scope>
    <source>
        <strain>cv. Columbia</strain>
    </source>
</reference>
<reference key="4">
    <citation type="journal article" date="2007" name="Planta">
        <title>The amino acid permease AAP8 is important for early seed development in Arabidopsis thaliana.</title>
        <authorList>
            <person name="Schmidt R."/>
            <person name="Stransky H."/>
            <person name="Koch W."/>
        </authorList>
    </citation>
    <scope>FUNCTION</scope>
    <scope>DISRUPTION PHENOTYPE</scope>
</reference>
<dbReference type="EMBL" id="AC004122">
    <property type="protein sequence ID" value="AAC34329.1"/>
    <property type="molecule type" value="Genomic_DNA"/>
</dbReference>
<dbReference type="EMBL" id="CP002684">
    <property type="protein sequence ID" value="AEE28528.1"/>
    <property type="molecule type" value="Genomic_DNA"/>
</dbReference>
<dbReference type="PIR" id="T00620">
    <property type="entry name" value="T00620"/>
</dbReference>
<dbReference type="RefSeq" id="NP_172472.1">
    <property type="nucleotide sequence ID" value="NM_100875.1"/>
</dbReference>
<dbReference type="SMR" id="O80592"/>
<dbReference type="BioGRID" id="22776">
    <property type="interactions" value="9"/>
</dbReference>
<dbReference type="FunCoup" id="O80592">
    <property type="interactions" value="1"/>
</dbReference>
<dbReference type="IntAct" id="O80592">
    <property type="interactions" value="6"/>
</dbReference>
<dbReference type="STRING" id="3702.O80592"/>
<dbReference type="TCDB" id="2.A.18.2.5">
    <property type="family name" value="the amino acid/auxin permease (aaap) family"/>
</dbReference>
<dbReference type="PaxDb" id="3702-AT1G10010.1"/>
<dbReference type="EnsemblPlants" id="AT1G10010.1">
    <property type="protein sequence ID" value="AT1G10010.1"/>
    <property type="gene ID" value="AT1G10010"/>
</dbReference>
<dbReference type="GeneID" id="837536"/>
<dbReference type="Gramene" id="AT1G10010.1">
    <property type="protein sequence ID" value="AT1G10010.1"/>
    <property type="gene ID" value="AT1G10010"/>
</dbReference>
<dbReference type="KEGG" id="ath:AT1G10010"/>
<dbReference type="Araport" id="AT1G10010"/>
<dbReference type="TAIR" id="AT1G10010">
    <property type="gene designation" value="AAP8"/>
</dbReference>
<dbReference type="eggNOG" id="KOG1303">
    <property type="taxonomic scope" value="Eukaryota"/>
</dbReference>
<dbReference type="HOGENOM" id="CLU_031247_4_1_1"/>
<dbReference type="InParanoid" id="O80592"/>
<dbReference type="OMA" id="WLVIFAN"/>
<dbReference type="PhylomeDB" id="O80592"/>
<dbReference type="SABIO-RK" id="O80592"/>
<dbReference type="PRO" id="PR:O80592"/>
<dbReference type="Proteomes" id="UP000006548">
    <property type="component" value="Chromosome 1"/>
</dbReference>
<dbReference type="ExpressionAtlas" id="O80592">
    <property type="expression patterns" value="baseline and differential"/>
</dbReference>
<dbReference type="GO" id="GO:0016020">
    <property type="term" value="C:membrane"/>
    <property type="evidence" value="ECO:0000250"/>
    <property type="project" value="TAIR"/>
</dbReference>
<dbReference type="GO" id="GO:0005886">
    <property type="term" value="C:plasma membrane"/>
    <property type="evidence" value="ECO:0007669"/>
    <property type="project" value="UniProtKB-SubCell"/>
</dbReference>
<dbReference type="GO" id="GO:0015293">
    <property type="term" value="F:symporter activity"/>
    <property type="evidence" value="ECO:0007669"/>
    <property type="project" value="UniProtKB-KW"/>
</dbReference>
<dbReference type="GO" id="GO:0006865">
    <property type="term" value="P:amino acid transport"/>
    <property type="evidence" value="ECO:0007669"/>
    <property type="project" value="UniProtKB-KW"/>
</dbReference>
<dbReference type="FunFam" id="1.20.1740.10:FF:000055">
    <property type="entry name" value="Amino acid permease 6"/>
    <property type="match status" value="1"/>
</dbReference>
<dbReference type="InterPro" id="IPR013057">
    <property type="entry name" value="AA_transpt_TM"/>
</dbReference>
<dbReference type="PANTHER" id="PTHR48017">
    <property type="entry name" value="OS05G0424000 PROTEIN-RELATED"/>
    <property type="match status" value="1"/>
</dbReference>
<dbReference type="Pfam" id="PF01490">
    <property type="entry name" value="Aa_trans"/>
    <property type="match status" value="1"/>
</dbReference>
<feature type="chain" id="PRO_0000387506" description="Amino acid permease 8">
    <location>
        <begin position="1"/>
        <end position="475"/>
    </location>
</feature>
<feature type="topological domain" description="Cytoplasmic" evidence="1">
    <location>
        <begin position="1"/>
        <end position="31"/>
    </location>
</feature>
<feature type="transmembrane region" description="Helical" evidence="1">
    <location>
        <begin position="32"/>
        <end position="52"/>
    </location>
</feature>
<feature type="transmembrane region" description="Helical" evidence="1">
    <location>
        <begin position="53"/>
        <end position="73"/>
    </location>
</feature>
<feature type="topological domain" description="Cytoplasmic" evidence="1">
    <location>
        <begin position="74"/>
        <end position="120"/>
    </location>
</feature>
<feature type="transmembrane region" description="Helical" evidence="1">
    <location>
        <begin position="121"/>
        <end position="141"/>
    </location>
</feature>
<feature type="topological domain" description="Extracellular" evidence="1">
    <location>
        <begin position="142"/>
        <end position="157"/>
    </location>
</feature>
<feature type="transmembrane region" description="Helical" evidence="1">
    <location>
        <begin position="158"/>
        <end position="178"/>
    </location>
</feature>
<feature type="topological domain" description="Cytoplasmic" evidence="1">
    <location>
        <begin position="179"/>
        <end position="185"/>
    </location>
</feature>
<feature type="transmembrane region" description="Helical" evidence="1">
    <location>
        <begin position="186"/>
        <end position="206"/>
    </location>
</feature>
<feature type="topological domain" description="Extracellular" evidence="1">
    <location>
        <begin position="207"/>
        <end position="236"/>
    </location>
</feature>
<feature type="transmembrane region" description="Helical" evidence="1">
    <location>
        <begin position="237"/>
        <end position="257"/>
    </location>
</feature>
<feature type="topological domain" description="Cytoplasmic" evidence="1">
    <location>
        <begin position="258"/>
        <end position="276"/>
    </location>
</feature>
<feature type="transmembrane region" description="Helical" evidence="1">
    <location>
        <begin position="277"/>
        <end position="297"/>
    </location>
</feature>
<feature type="topological domain" description="Extracellular" evidence="1">
    <location>
        <begin position="298"/>
        <end position="314"/>
    </location>
</feature>
<feature type="transmembrane region" description="Helical" evidence="1">
    <location>
        <begin position="315"/>
        <end position="335"/>
    </location>
</feature>
<feature type="topological domain" description="Cytoplasmic" evidence="1">
    <location>
        <begin position="336"/>
        <end position="378"/>
    </location>
</feature>
<feature type="transmembrane region" description="Helical" evidence="1">
    <location>
        <begin position="379"/>
        <end position="398"/>
    </location>
</feature>
<feature type="topological domain" description="Extracellular" evidence="1">
    <location>
        <begin position="399"/>
        <end position="401"/>
    </location>
</feature>
<feature type="transmembrane region" description="Helical" evidence="1">
    <location>
        <begin position="402"/>
        <end position="424"/>
    </location>
</feature>
<feature type="topological domain" description="Cytoplasmic" evidence="1">
    <location>
        <begin position="425"/>
        <end position="441"/>
    </location>
</feature>
<feature type="transmembrane region" description="Helical" evidence="1">
    <location>
        <begin position="442"/>
        <end position="462"/>
    </location>
</feature>
<feature type="topological domain" description="Extracellular" evidence="1">
    <location>
        <begin position="463"/>
        <end position="475"/>
    </location>
</feature>
<feature type="region of interest" description="Disordered" evidence="2">
    <location>
        <begin position="1"/>
        <end position="22"/>
    </location>
</feature>
<name>AAP8_ARATH</name>
<comment type="function">
    <text evidence="4">Amino acid-proton symporter. Stereospecific transporter with a broad specificity for glutamate, aspartate and neutral and acidic amino acids.</text>
</comment>
<comment type="biophysicochemical properties">
    <kinetics>
        <KM evidence="3">444 uM for aspartate</KM>
        <Vmax evidence="3">1.7 nmol/min/mg enzyme toward aspartate</Vmax>
    </kinetics>
</comment>
<comment type="subcellular location">
    <subcellularLocation>
        <location evidence="5">Cell membrane</location>
        <topology evidence="5">Multi-pass membrane protein</topology>
    </subcellularLocation>
</comment>
<comment type="tissue specificity">
    <text evidence="3">Expressed in flower buds, siliques, developing seeds and funiculi.</text>
</comment>
<comment type="developmental stage">
    <text evidence="3">Found in young seeds 2 to 5 days after fertilization, but not expressed in mature seeds.</text>
</comment>
<comment type="disruption phenotype">
    <text evidence="4">Reduced seed number and silique size correlated with a specifically altered amino acid composition of young siliques.</text>
</comment>
<comment type="similarity">
    <text evidence="5">Belongs to the amino acid/polyamine transporter 2 family. Amino acid/auxin permease (AAAP) (TC 2.A.18.2) subfamily.</text>
</comment>